<keyword id="KW-0145">Chemotaxis</keyword>
<keyword id="KW-0963">Cytoplasm</keyword>
<keyword id="KW-0378">Hydrolase</keyword>
<keyword id="KW-0597">Phosphoprotein</keyword>
<protein>
    <recommendedName>
        <fullName evidence="1">Protein-glutamate methylesterase/protein-glutamine glutaminase 1</fullName>
        <ecNumber evidence="1">3.1.1.61</ecNumber>
        <ecNumber evidence="1">3.5.1.44</ecNumber>
    </recommendedName>
</protein>
<reference key="1">
    <citation type="journal article" date="2005" name="Nat. Biotechnol.">
        <title>Complete genome sequence of the plant commensal Pseudomonas fluorescens Pf-5.</title>
        <authorList>
            <person name="Paulsen I.T."/>
            <person name="Press C.M."/>
            <person name="Ravel J."/>
            <person name="Kobayashi D.Y."/>
            <person name="Myers G.S.A."/>
            <person name="Mavrodi D.V."/>
            <person name="DeBoy R.T."/>
            <person name="Seshadri R."/>
            <person name="Ren Q."/>
            <person name="Madupu R."/>
            <person name="Dodson R.J."/>
            <person name="Durkin A.S."/>
            <person name="Brinkac L.M."/>
            <person name="Daugherty S.C."/>
            <person name="Sullivan S.A."/>
            <person name="Rosovitz M.J."/>
            <person name="Gwinn M.L."/>
            <person name="Zhou L."/>
            <person name="Schneider D.J."/>
            <person name="Cartinhour S.W."/>
            <person name="Nelson W.C."/>
            <person name="Weidman J."/>
            <person name="Watkins K."/>
            <person name="Tran K."/>
            <person name="Khouri H."/>
            <person name="Pierson E.A."/>
            <person name="Pierson L.S. III"/>
            <person name="Thomashow L.S."/>
            <person name="Loper J.E."/>
        </authorList>
    </citation>
    <scope>NUCLEOTIDE SEQUENCE [LARGE SCALE GENOMIC DNA]</scope>
    <source>
        <strain>ATCC BAA-477 / NRRL B-23932 / Pf-5</strain>
    </source>
</reference>
<name>CHEB1_PSEF5</name>
<dbReference type="EC" id="3.1.1.61" evidence="1"/>
<dbReference type="EC" id="3.5.1.44" evidence="1"/>
<dbReference type="EMBL" id="CP000076">
    <property type="protein sequence ID" value="AAY90421.1"/>
    <property type="molecule type" value="Genomic_DNA"/>
</dbReference>
<dbReference type="RefSeq" id="WP_011059482.1">
    <property type="nucleotide sequence ID" value="NC_004129.6"/>
</dbReference>
<dbReference type="SMR" id="Q4KHL8"/>
<dbReference type="STRING" id="220664.PFL_1134"/>
<dbReference type="DNASU" id="3478912"/>
<dbReference type="KEGG" id="pfl:PFL_1134"/>
<dbReference type="PATRIC" id="fig|220664.5.peg.1165"/>
<dbReference type="eggNOG" id="COG2201">
    <property type="taxonomic scope" value="Bacteria"/>
</dbReference>
<dbReference type="HOGENOM" id="CLU_000445_51_0_6"/>
<dbReference type="Proteomes" id="UP000008540">
    <property type="component" value="Chromosome"/>
</dbReference>
<dbReference type="GO" id="GO:0005737">
    <property type="term" value="C:cytoplasm"/>
    <property type="evidence" value="ECO:0007669"/>
    <property type="project" value="UniProtKB-SubCell"/>
</dbReference>
<dbReference type="GO" id="GO:0000156">
    <property type="term" value="F:phosphorelay response regulator activity"/>
    <property type="evidence" value="ECO:0007669"/>
    <property type="project" value="InterPro"/>
</dbReference>
<dbReference type="GO" id="GO:0008984">
    <property type="term" value="F:protein-glutamate methylesterase activity"/>
    <property type="evidence" value="ECO:0007669"/>
    <property type="project" value="UniProtKB-UniRule"/>
</dbReference>
<dbReference type="GO" id="GO:0050568">
    <property type="term" value="F:protein-glutamine glutaminase activity"/>
    <property type="evidence" value="ECO:0007669"/>
    <property type="project" value="UniProtKB-UniRule"/>
</dbReference>
<dbReference type="GO" id="GO:0006935">
    <property type="term" value="P:chemotaxis"/>
    <property type="evidence" value="ECO:0007669"/>
    <property type="project" value="UniProtKB-UniRule"/>
</dbReference>
<dbReference type="CDD" id="cd16432">
    <property type="entry name" value="CheB_Rec"/>
    <property type="match status" value="1"/>
</dbReference>
<dbReference type="CDD" id="cd17541">
    <property type="entry name" value="REC_CheB-like"/>
    <property type="match status" value="1"/>
</dbReference>
<dbReference type="Gene3D" id="3.40.50.2300">
    <property type="match status" value="1"/>
</dbReference>
<dbReference type="Gene3D" id="3.40.50.180">
    <property type="entry name" value="Methylesterase CheB, C-terminal domain"/>
    <property type="match status" value="1"/>
</dbReference>
<dbReference type="HAMAP" id="MF_00099">
    <property type="entry name" value="CheB_chemtxs"/>
    <property type="match status" value="1"/>
</dbReference>
<dbReference type="InterPro" id="IPR008248">
    <property type="entry name" value="CheB-like"/>
</dbReference>
<dbReference type="InterPro" id="IPR035909">
    <property type="entry name" value="CheB_C"/>
</dbReference>
<dbReference type="InterPro" id="IPR011006">
    <property type="entry name" value="CheY-like_superfamily"/>
</dbReference>
<dbReference type="InterPro" id="IPR000673">
    <property type="entry name" value="Sig_transdc_resp-reg_Me-estase"/>
</dbReference>
<dbReference type="InterPro" id="IPR001789">
    <property type="entry name" value="Sig_transdc_resp-reg_receiver"/>
</dbReference>
<dbReference type="NCBIfam" id="NF001965">
    <property type="entry name" value="PRK00742.1"/>
    <property type="match status" value="1"/>
</dbReference>
<dbReference type="NCBIfam" id="NF009206">
    <property type="entry name" value="PRK12555.1"/>
    <property type="match status" value="1"/>
</dbReference>
<dbReference type="PANTHER" id="PTHR42872">
    <property type="entry name" value="PROTEIN-GLUTAMATE METHYLESTERASE/PROTEIN-GLUTAMINE GLUTAMINASE"/>
    <property type="match status" value="1"/>
</dbReference>
<dbReference type="PANTHER" id="PTHR42872:SF6">
    <property type="entry name" value="PROTEIN-GLUTAMATE METHYLESTERASE_PROTEIN-GLUTAMINE GLUTAMINASE"/>
    <property type="match status" value="1"/>
</dbReference>
<dbReference type="Pfam" id="PF01339">
    <property type="entry name" value="CheB_methylest"/>
    <property type="match status" value="1"/>
</dbReference>
<dbReference type="Pfam" id="PF00072">
    <property type="entry name" value="Response_reg"/>
    <property type="match status" value="1"/>
</dbReference>
<dbReference type="PIRSF" id="PIRSF000876">
    <property type="entry name" value="RR_chemtxs_CheB"/>
    <property type="match status" value="1"/>
</dbReference>
<dbReference type="SMART" id="SM00448">
    <property type="entry name" value="REC"/>
    <property type="match status" value="1"/>
</dbReference>
<dbReference type="SUPFAM" id="SSF52172">
    <property type="entry name" value="CheY-like"/>
    <property type="match status" value="1"/>
</dbReference>
<dbReference type="SUPFAM" id="SSF52738">
    <property type="entry name" value="Methylesterase CheB, C-terminal domain"/>
    <property type="match status" value="1"/>
</dbReference>
<dbReference type="PROSITE" id="PS50122">
    <property type="entry name" value="CHEB"/>
    <property type="match status" value="1"/>
</dbReference>
<dbReference type="PROSITE" id="PS50110">
    <property type="entry name" value="RESPONSE_REGULATORY"/>
    <property type="match status" value="1"/>
</dbReference>
<feature type="chain" id="PRO_0000225469" description="Protein-glutamate methylesterase/protein-glutamine glutaminase 1">
    <location>
        <begin position="1"/>
        <end position="336"/>
    </location>
</feature>
<feature type="domain" description="Response regulatory" evidence="1">
    <location>
        <begin position="2"/>
        <end position="119"/>
    </location>
</feature>
<feature type="domain" description="CheB-type methylesterase" evidence="1">
    <location>
        <begin position="143"/>
        <end position="336"/>
    </location>
</feature>
<feature type="active site" evidence="1">
    <location>
        <position position="159"/>
    </location>
</feature>
<feature type="active site" evidence="1">
    <location>
        <position position="186"/>
    </location>
</feature>
<feature type="active site" evidence="1">
    <location>
        <position position="279"/>
    </location>
</feature>
<feature type="modified residue" description="4-aspartylphosphate" evidence="1">
    <location>
        <position position="53"/>
    </location>
</feature>
<sequence length="336" mass="35695">MKIAIVNDMPMAVEALRRALAFDPSHEVVWVATNGAEAVKYCAELTPDLILMDLIMPVMDGVEATRRIMAESPCAIVIVTVDRQQNVHRVFEAMGHGALDVVDTPALGAGNAQEAAAPLLRKILNIGWLIGQRGSRVRSAPQPLRSGAPRQSLVAIGSSAGGPAALEVLLKGLPKDFAAAIVLVQHVDQVFAAGMAEWLSSASGLEVRLAREGEPPQSGKVLLAGTNHHIRLLKNGTLAYTAEPVNEIYRPSIDVFFESVASFWNGDAVGVLLTGMGRDGAQGLKLMRDQGYLTIAQDQNSSAVYGMPKAAAAIGAASEIRPLDKIAPRLLEIFAK</sequence>
<comment type="function">
    <text evidence="1">Involved in chemotaxis. Part of a chemotaxis signal transduction system that modulates chemotaxis in response to various stimuli. Catalyzes the demethylation of specific methylglutamate residues introduced into the chemoreceptors (methyl-accepting chemotaxis proteins or MCP) by CheR. Also mediates the irreversible deamidation of specific glutamine residues to glutamic acid.</text>
</comment>
<comment type="catalytic activity">
    <reaction evidence="1">
        <text>[protein]-L-glutamate 5-O-methyl ester + H2O = L-glutamyl-[protein] + methanol + H(+)</text>
        <dbReference type="Rhea" id="RHEA:23236"/>
        <dbReference type="Rhea" id="RHEA-COMP:10208"/>
        <dbReference type="Rhea" id="RHEA-COMP:10311"/>
        <dbReference type="ChEBI" id="CHEBI:15377"/>
        <dbReference type="ChEBI" id="CHEBI:15378"/>
        <dbReference type="ChEBI" id="CHEBI:17790"/>
        <dbReference type="ChEBI" id="CHEBI:29973"/>
        <dbReference type="ChEBI" id="CHEBI:82795"/>
        <dbReference type="EC" id="3.1.1.61"/>
    </reaction>
</comment>
<comment type="catalytic activity">
    <reaction evidence="1">
        <text>L-glutaminyl-[protein] + H2O = L-glutamyl-[protein] + NH4(+)</text>
        <dbReference type="Rhea" id="RHEA:16441"/>
        <dbReference type="Rhea" id="RHEA-COMP:10207"/>
        <dbReference type="Rhea" id="RHEA-COMP:10208"/>
        <dbReference type="ChEBI" id="CHEBI:15377"/>
        <dbReference type="ChEBI" id="CHEBI:28938"/>
        <dbReference type="ChEBI" id="CHEBI:29973"/>
        <dbReference type="ChEBI" id="CHEBI:30011"/>
        <dbReference type="EC" id="3.5.1.44"/>
    </reaction>
</comment>
<comment type="subcellular location">
    <subcellularLocation>
        <location evidence="1">Cytoplasm</location>
    </subcellularLocation>
</comment>
<comment type="domain">
    <text evidence="1">Contains a C-terminal catalytic domain, and an N-terminal region which modulates catalytic activity.</text>
</comment>
<comment type="PTM">
    <text evidence="1">Phosphorylated by CheA. Phosphorylation of the N-terminal regulatory domain activates the methylesterase activity.</text>
</comment>
<comment type="similarity">
    <text evidence="1">Belongs to the CheB family.</text>
</comment>
<accession>Q4KHL8</accession>
<organism>
    <name type="scientific">Pseudomonas fluorescens (strain ATCC BAA-477 / NRRL B-23932 / Pf-5)</name>
    <dbReference type="NCBI Taxonomy" id="220664"/>
    <lineage>
        <taxon>Bacteria</taxon>
        <taxon>Pseudomonadati</taxon>
        <taxon>Pseudomonadota</taxon>
        <taxon>Gammaproteobacteria</taxon>
        <taxon>Pseudomonadales</taxon>
        <taxon>Pseudomonadaceae</taxon>
        <taxon>Pseudomonas</taxon>
    </lineage>
</organism>
<proteinExistence type="inferred from homology"/>
<evidence type="ECO:0000255" key="1">
    <source>
        <dbReference type="HAMAP-Rule" id="MF_00099"/>
    </source>
</evidence>
<gene>
    <name evidence="1" type="primary">cheB1</name>
    <name type="ordered locus">PFL_1134</name>
</gene>